<evidence type="ECO:0000255" key="1">
    <source>
        <dbReference type="HAMAP-Rule" id="MF_00220"/>
    </source>
</evidence>
<feature type="chain" id="PRO_0000147244" description="Dihydroorotase">
    <location>
        <begin position="1"/>
        <end position="430"/>
    </location>
</feature>
<feature type="active site" evidence="1">
    <location>
        <position position="304"/>
    </location>
</feature>
<feature type="binding site" evidence="1">
    <location>
        <position position="57"/>
    </location>
    <ligand>
        <name>Zn(2+)</name>
        <dbReference type="ChEBI" id="CHEBI:29105"/>
        <label>1</label>
    </ligand>
</feature>
<feature type="binding site" evidence="1">
    <location>
        <begin position="59"/>
        <end position="61"/>
    </location>
    <ligand>
        <name>substrate</name>
    </ligand>
</feature>
<feature type="binding site" evidence="1">
    <location>
        <position position="59"/>
    </location>
    <ligand>
        <name>Zn(2+)</name>
        <dbReference type="ChEBI" id="CHEBI:29105"/>
        <label>1</label>
    </ligand>
</feature>
<feature type="binding site" evidence="1">
    <location>
        <position position="91"/>
    </location>
    <ligand>
        <name>substrate</name>
    </ligand>
</feature>
<feature type="binding site" evidence="1">
    <location>
        <position position="151"/>
    </location>
    <ligand>
        <name>Zn(2+)</name>
        <dbReference type="ChEBI" id="CHEBI:29105"/>
        <label>1</label>
    </ligand>
</feature>
<feature type="binding site" evidence="1">
    <location>
        <position position="151"/>
    </location>
    <ligand>
        <name>Zn(2+)</name>
        <dbReference type="ChEBI" id="CHEBI:29105"/>
        <label>2</label>
    </ligand>
</feature>
<feature type="binding site" evidence="1">
    <location>
        <position position="178"/>
    </location>
    <ligand>
        <name>Zn(2+)</name>
        <dbReference type="ChEBI" id="CHEBI:29105"/>
        <label>2</label>
    </ligand>
</feature>
<feature type="binding site" evidence="1">
    <location>
        <position position="231"/>
    </location>
    <ligand>
        <name>Zn(2+)</name>
        <dbReference type="ChEBI" id="CHEBI:29105"/>
        <label>2</label>
    </ligand>
</feature>
<feature type="binding site" evidence="1">
    <location>
        <position position="277"/>
    </location>
    <ligand>
        <name>substrate</name>
    </ligand>
</feature>
<feature type="binding site" evidence="1">
    <location>
        <position position="304"/>
    </location>
    <ligand>
        <name>Zn(2+)</name>
        <dbReference type="ChEBI" id="CHEBI:29105"/>
        <label>1</label>
    </ligand>
</feature>
<feature type="binding site" evidence="1">
    <location>
        <position position="308"/>
    </location>
    <ligand>
        <name>substrate</name>
    </ligand>
</feature>
<feature type="binding site" evidence="1">
    <location>
        <begin position="322"/>
        <end position="323"/>
    </location>
    <ligand>
        <name>substrate</name>
    </ligand>
</feature>
<protein>
    <recommendedName>
        <fullName evidence="1">Dihydroorotase</fullName>
        <shortName evidence="1">DHOase</shortName>
        <ecNumber evidence="1">3.5.2.3</ecNumber>
    </recommendedName>
</protein>
<gene>
    <name evidence="1" type="primary">pyrC</name>
    <name type="ordered locus">Rv1381</name>
    <name type="ORF">MTCY02B12.15</name>
</gene>
<reference key="1">
    <citation type="journal article" date="1998" name="Nature">
        <title>Deciphering the biology of Mycobacterium tuberculosis from the complete genome sequence.</title>
        <authorList>
            <person name="Cole S.T."/>
            <person name="Brosch R."/>
            <person name="Parkhill J."/>
            <person name="Garnier T."/>
            <person name="Churcher C.M."/>
            <person name="Harris D.E."/>
            <person name="Gordon S.V."/>
            <person name="Eiglmeier K."/>
            <person name="Gas S."/>
            <person name="Barry C.E. III"/>
            <person name="Tekaia F."/>
            <person name="Badcock K."/>
            <person name="Basham D."/>
            <person name="Brown D."/>
            <person name="Chillingworth T."/>
            <person name="Connor R."/>
            <person name="Davies R.M."/>
            <person name="Devlin K."/>
            <person name="Feltwell T."/>
            <person name="Gentles S."/>
            <person name="Hamlin N."/>
            <person name="Holroyd S."/>
            <person name="Hornsby T."/>
            <person name="Jagels K."/>
            <person name="Krogh A."/>
            <person name="McLean J."/>
            <person name="Moule S."/>
            <person name="Murphy L.D."/>
            <person name="Oliver S."/>
            <person name="Osborne J."/>
            <person name="Quail M.A."/>
            <person name="Rajandream M.A."/>
            <person name="Rogers J."/>
            <person name="Rutter S."/>
            <person name="Seeger K."/>
            <person name="Skelton S."/>
            <person name="Squares S."/>
            <person name="Squares R."/>
            <person name="Sulston J.E."/>
            <person name="Taylor K."/>
            <person name="Whitehead S."/>
            <person name="Barrell B.G."/>
        </authorList>
    </citation>
    <scope>NUCLEOTIDE SEQUENCE [LARGE SCALE GENOMIC DNA]</scope>
    <source>
        <strain>ATCC 25618 / H37Rv</strain>
    </source>
</reference>
<reference key="2">
    <citation type="journal article" date="2011" name="Mol. Cell. Proteomics">
        <title>Proteogenomic analysis of Mycobacterium tuberculosis by high resolution mass spectrometry.</title>
        <authorList>
            <person name="Kelkar D.S."/>
            <person name="Kumar D."/>
            <person name="Kumar P."/>
            <person name="Balakrishnan L."/>
            <person name="Muthusamy B."/>
            <person name="Yadav A.K."/>
            <person name="Shrivastava P."/>
            <person name="Marimuthu A."/>
            <person name="Anand S."/>
            <person name="Sundaram H."/>
            <person name="Kingsbury R."/>
            <person name="Harsha H.C."/>
            <person name="Nair B."/>
            <person name="Prasad T.S."/>
            <person name="Chauhan D.S."/>
            <person name="Katoch K."/>
            <person name="Katoch V.M."/>
            <person name="Kumar P."/>
            <person name="Chaerkady R."/>
            <person name="Ramachandran S."/>
            <person name="Dash D."/>
            <person name="Pandey A."/>
        </authorList>
    </citation>
    <scope>IDENTIFICATION BY MASS SPECTROMETRY [LARGE SCALE ANALYSIS]</scope>
    <source>
        <strain>ATCC 25618 / H37Rv</strain>
    </source>
</reference>
<keyword id="KW-0378">Hydrolase</keyword>
<keyword id="KW-0479">Metal-binding</keyword>
<keyword id="KW-0665">Pyrimidine biosynthesis</keyword>
<keyword id="KW-1185">Reference proteome</keyword>
<keyword id="KW-0862">Zinc</keyword>
<comment type="function">
    <text evidence="1">Catalyzes the reversible cyclization of carbamoyl aspartate to dihydroorotate.</text>
</comment>
<comment type="catalytic activity">
    <reaction evidence="1">
        <text>(S)-dihydroorotate + H2O = N-carbamoyl-L-aspartate + H(+)</text>
        <dbReference type="Rhea" id="RHEA:24296"/>
        <dbReference type="ChEBI" id="CHEBI:15377"/>
        <dbReference type="ChEBI" id="CHEBI:15378"/>
        <dbReference type="ChEBI" id="CHEBI:30864"/>
        <dbReference type="ChEBI" id="CHEBI:32814"/>
        <dbReference type="EC" id="3.5.2.3"/>
    </reaction>
</comment>
<comment type="cofactor">
    <cofactor evidence="1">
        <name>Zn(2+)</name>
        <dbReference type="ChEBI" id="CHEBI:29105"/>
    </cofactor>
    <text evidence="1">Binds 2 Zn(2+) ions per subunit.</text>
</comment>
<comment type="pathway">
    <text evidence="1">Pyrimidine metabolism; UMP biosynthesis via de novo pathway; (S)-dihydroorotate from bicarbonate: step 3/3.</text>
</comment>
<comment type="similarity">
    <text evidence="1">Belongs to the metallo-dependent hydrolases superfamily. DHOase family. Class I DHOase subfamily.</text>
</comment>
<organism>
    <name type="scientific">Mycobacterium tuberculosis (strain ATCC 25618 / H37Rv)</name>
    <dbReference type="NCBI Taxonomy" id="83332"/>
    <lineage>
        <taxon>Bacteria</taxon>
        <taxon>Bacillati</taxon>
        <taxon>Actinomycetota</taxon>
        <taxon>Actinomycetes</taxon>
        <taxon>Mycobacteriales</taxon>
        <taxon>Mycobacteriaceae</taxon>
        <taxon>Mycobacterium</taxon>
        <taxon>Mycobacterium tuberculosis complex</taxon>
    </lineage>
</organism>
<accession>P9WHL3</accession>
<accession>L0T837</accession>
<accession>P71809</accession>
<name>PYRC_MYCTU</name>
<proteinExistence type="evidence at protein level"/>
<dbReference type="EC" id="3.5.2.3" evidence="1"/>
<dbReference type="EMBL" id="AL123456">
    <property type="protein sequence ID" value="CCP44140.1"/>
    <property type="molecule type" value="Genomic_DNA"/>
</dbReference>
<dbReference type="PIR" id="B70959">
    <property type="entry name" value="B70959"/>
</dbReference>
<dbReference type="RefSeq" id="NP_215897.1">
    <property type="nucleotide sequence ID" value="NC_000962.3"/>
</dbReference>
<dbReference type="RefSeq" id="WP_003407204.1">
    <property type="nucleotide sequence ID" value="NZ_NVQJ01000050.1"/>
</dbReference>
<dbReference type="SMR" id="P9WHL3"/>
<dbReference type="FunCoup" id="P9WHL3">
    <property type="interactions" value="314"/>
</dbReference>
<dbReference type="STRING" id="83332.Rv1381"/>
<dbReference type="PaxDb" id="83332-Rv1381"/>
<dbReference type="DNASU" id="886765"/>
<dbReference type="GeneID" id="886765"/>
<dbReference type="KEGG" id="mtu:Rv1381"/>
<dbReference type="KEGG" id="mtv:RVBD_1381"/>
<dbReference type="TubercuList" id="Rv1381"/>
<dbReference type="eggNOG" id="COG0044">
    <property type="taxonomic scope" value="Bacteria"/>
</dbReference>
<dbReference type="InParanoid" id="P9WHL3"/>
<dbReference type="OrthoDB" id="9803027at2"/>
<dbReference type="PhylomeDB" id="P9WHL3"/>
<dbReference type="UniPathway" id="UPA00070">
    <property type="reaction ID" value="UER00117"/>
</dbReference>
<dbReference type="Proteomes" id="UP000001584">
    <property type="component" value="Chromosome"/>
</dbReference>
<dbReference type="GO" id="GO:0005737">
    <property type="term" value="C:cytoplasm"/>
    <property type="evidence" value="ECO:0000318"/>
    <property type="project" value="GO_Central"/>
</dbReference>
<dbReference type="GO" id="GO:0004038">
    <property type="term" value="F:allantoinase activity"/>
    <property type="evidence" value="ECO:0000318"/>
    <property type="project" value="GO_Central"/>
</dbReference>
<dbReference type="GO" id="GO:0004151">
    <property type="term" value="F:dihydroorotase activity"/>
    <property type="evidence" value="ECO:0007669"/>
    <property type="project" value="UniProtKB-UniRule"/>
</dbReference>
<dbReference type="GO" id="GO:0008270">
    <property type="term" value="F:zinc ion binding"/>
    <property type="evidence" value="ECO:0007669"/>
    <property type="project" value="UniProtKB-UniRule"/>
</dbReference>
<dbReference type="GO" id="GO:0044205">
    <property type="term" value="P:'de novo' UMP biosynthetic process"/>
    <property type="evidence" value="ECO:0007669"/>
    <property type="project" value="UniProtKB-UniRule"/>
</dbReference>
<dbReference type="GO" id="GO:0006145">
    <property type="term" value="P:purine nucleobase catabolic process"/>
    <property type="evidence" value="ECO:0000318"/>
    <property type="project" value="GO_Central"/>
</dbReference>
<dbReference type="CDD" id="cd01317">
    <property type="entry name" value="DHOase_IIa"/>
    <property type="match status" value="1"/>
</dbReference>
<dbReference type="Gene3D" id="3.20.20.140">
    <property type="entry name" value="Metal-dependent hydrolases"/>
    <property type="match status" value="1"/>
</dbReference>
<dbReference type="Gene3D" id="2.30.40.10">
    <property type="entry name" value="Urease, subunit C, domain 1"/>
    <property type="match status" value="1"/>
</dbReference>
<dbReference type="HAMAP" id="MF_00220_B">
    <property type="entry name" value="PyrC_classI_B"/>
    <property type="match status" value="1"/>
</dbReference>
<dbReference type="InterPro" id="IPR006680">
    <property type="entry name" value="Amidohydro-rel"/>
</dbReference>
<dbReference type="InterPro" id="IPR004722">
    <property type="entry name" value="DHOase"/>
</dbReference>
<dbReference type="InterPro" id="IPR050138">
    <property type="entry name" value="DHOase/Allantoinase_Hydrolase"/>
</dbReference>
<dbReference type="InterPro" id="IPR002195">
    <property type="entry name" value="Dihydroorotase_CS"/>
</dbReference>
<dbReference type="InterPro" id="IPR011059">
    <property type="entry name" value="Metal-dep_hydrolase_composite"/>
</dbReference>
<dbReference type="InterPro" id="IPR032466">
    <property type="entry name" value="Metal_Hydrolase"/>
</dbReference>
<dbReference type="NCBIfam" id="NF006836">
    <property type="entry name" value="PRK09357.1-1"/>
    <property type="match status" value="1"/>
</dbReference>
<dbReference type="NCBIfam" id="TIGR00857">
    <property type="entry name" value="pyrC_multi"/>
    <property type="match status" value="1"/>
</dbReference>
<dbReference type="PANTHER" id="PTHR43668">
    <property type="entry name" value="ALLANTOINASE"/>
    <property type="match status" value="1"/>
</dbReference>
<dbReference type="PANTHER" id="PTHR43668:SF2">
    <property type="entry name" value="ALLANTOINASE"/>
    <property type="match status" value="1"/>
</dbReference>
<dbReference type="Pfam" id="PF01979">
    <property type="entry name" value="Amidohydro_1"/>
    <property type="match status" value="1"/>
</dbReference>
<dbReference type="SUPFAM" id="SSF51338">
    <property type="entry name" value="Composite domain of metallo-dependent hydrolases"/>
    <property type="match status" value="1"/>
</dbReference>
<dbReference type="SUPFAM" id="SSF51556">
    <property type="entry name" value="Metallo-dependent hydrolases"/>
    <property type="match status" value="1"/>
</dbReference>
<dbReference type="PROSITE" id="PS00483">
    <property type="entry name" value="DIHYDROOROTASE_2"/>
    <property type="match status" value="1"/>
</dbReference>
<sequence>MSVLIRGVRPYGEGERVDVLVDDGQIAQIGPDLAIPDTADVIDATGHVLLPGFVDLHTHLREPGREYAEDIETGSAAAALGGYTAVFAMANTNPVADSPVVTDHVWHRGQQVGLVDVHPVGAVTVGLAGAELTEMGMMNAGAAQVRMFSDDGVCVHDPLIMRRALEYATGLGVLIAQHAEEPRLTVGAVAHEGPMAARLGLAGWPRAAEESIVARDALLARDAGARVHICHASAAGTVEILKWAKDQGISITAEVTPHHLLLDDARLASYDGVNRVNPPLREASDAVALRQALADGIIDCVATDHAPHAEHEKCVEFAAARPGMLGLQTALSVVVQTMVAPGLLSWRDIARVMSENPACIARLPDQGRPLEVGEPANLTVVDPDATWTVTGADLASRSANTPFESMSLPATVTATLLRGKVTARDGKIRA</sequence>